<evidence type="ECO:0000255" key="1">
    <source>
        <dbReference type="HAMAP-Rule" id="MF_00083"/>
    </source>
</evidence>
<feature type="chain" id="PRO_1000202582" description="Peptidyl-tRNA hydrolase">
    <location>
        <begin position="1"/>
        <end position="186"/>
    </location>
</feature>
<feature type="active site" description="Proton acceptor" evidence="1">
    <location>
        <position position="19"/>
    </location>
</feature>
<feature type="binding site" evidence="1">
    <location>
        <position position="14"/>
    </location>
    <ligand>
        <name>tRNA</name>
        <dbReference type="ChEBI" id="CHEBI:17843"/>
    </ligand>
</feature>
<feature type="binding site" evidence="1">
    <location>
        <position position="64"/>
    </location>
    <ligand>
        <name>tRNA</name>
        <dbReference type="ChEBI" id="CHEBI:17843"/>
    </ligand>
</feature>
<feature type="binding site" evidence="1">
    <location>
        <position position="66"/>
    </location>
    <ligand>
        <name>tRNA</name>
        <dbReference type="ChEBI" id="CHEBI:17843"/>
    </ligand>
</feature>
<feature type="binding site" evidence="1">
    <location>
        <position position="112"/>
    </location>
    <ligand>
        <name>tRNA</name>
        <dbReference type="ChEBI" id="CHEBI:17843"/>
    </ligand>
</feature>
<feature type="site" description="Discriminates between blocked and unblocked aminoacyl-tRNA" evidence="1">
    <location>
        <position position="9"/>
    </location>
</feature>
<feature type="site" description="Stabilizes the basic form of H active site to accept a proton" evidence="1">
    <location>
        <position position="91"/>
    </location>
</feature>
<dbReference type="EC" id="3.1.1.29" evidence="1"/>
<dbReference type="EMBL" id="CP001104">
    <property type="protein sequence ID" value="ACR72904.1"/>
    <property type="molecule type" value="Genomic_DNA"/>
</dbReference>
<dbReference type="RefSeq" id="WP_012740136.1">
    <property type="nucleotide sequence ID" value="NC_012778.1"/>
</dbReference>
<dbReference type="SMR" id="C4Z4L5"/>
<dbReference type="STRING" id="515620.EUBELI_01915"/>
<dbReference type="GeneID" id="41356562"/>
<dbReference type="KEGG" id="eel:EUBELI_01915"/>
<dbReference type="eggNOG" id="COG0193">
    <property type="taxonomic scope" value="Bacteria"/>
</dbReference>
<dbReference type="HOGENOM" id="CLU_062456_4_1_9"/>
<dbReference type="Proteomes" id="UP000001476">
    <property type="component" value="Chromosome"/>
</dbReference>
<dbReference type="GO" id="GO:0005737">
    <property type="term" value="C:cytoplasm"/>
    <property type="evidence" value="ECO:0007669"/>
    <property type="project" value="UniProtKB-SubCell"/>
</dbReference>
<dbReference type="GO" id="GO:0004045">
    <property type="term" value="F:peptidyl-tRNA hydrolase activity"/>
    <property type="evidence" value="ECO:0007669"/>
    <property type="project" value="UniProtKB-UniRule"/>
</dbReference>
<dbReference type="GO" id="GO:0000049">
    <property type="term" value="F:tRNA binding"/>
    <property type="evidence" value="ECO:0007669"/>
    <property type="project" value="UniProtKB-UniRule"/>
</dbReference>
<dbReference type="GO" id="GO:0006515">
    <property type="term" value="P:protein quality control for misfolded or incompletely synthesized proteins"/>
    <property type="evidence" value="ECO:0007669"/>
    <property type="project" value="UniProtKB-UniRule"/>
</dbReference>
<dbReference type="GO" id="GO:0072344">
    <property type="term" value="P:rescue of stalled ribosome"/>
    <property type="evidence" value="ECO:0007669"/>
    <property type="project" value="UniProtKB-UniRule"/>
</dbReference>
<dbReference type="CDD" id="cd00462">
    <property type="entry name" value="PTH"/>
    <property type="match status" value="1"/>
</dbReference>
<dbReference type="FunFam" id="3.40.50.1470:FF:000001">
    <property type="entry name" value="Peptidyl-tRNA hydrolase"/>
    <property type="match status" value="1"/>
</dbReference>
<dbReference type="Gene3D" id="3.40.50.1470">
    <property type="entry name" value="Peptidyl-tRNA hydrolase"/>
    <property type="match status" value="1"/>
</dbReference>
<dbReference type="HAMAP" id="MF_00083">
    <property type="entry name" value="Pept_tRNA_hydro_bact"/>
    <property type="match status" value="1"/>
</dbReference>
<dbReference type="InterPro" id="IPR001328">
    <property type="entry name" value="Pept_tRNA_hydro"/>
</dbReference>
<dbReference type="InterPro" id="IPR018171">
    <property type="entry name" value="Pept_tRNA_hydro_CS"/>
</dbReference>
<dbReference type="InterPro" id="IPR036416">
    <property type="entry name" value="Pept_tRNA_hydro_sf"/>
</dbReference>
<dbReference type="NCBIfam" id="TIGR00447">
    <property type="entry name" value="pth"/>
    <property type="match status" value="1"/>
</dbReference>
<dbReference type="PANTHER" id="PTHR17224">
    <property type="entry name" value="PEPTIDYL-TRNA HYDROLASE"/>
    <property type="match status" value="1"/>
</dbReference>
<dbReference type="PANTHER" id="PTHR17224:SF1">
    <property type="entry name" value="PEPTIDYL-TRNA HYDROLASE"/>
    <property type="match status" value="1"/>
</dbReference>
<dbReference type="Pfam" id="PF01195">
    <property type="entry name" value="Pept_tRNA_hydro"/>
    <property type="match status" value="1"/>
</dbReference>
<dbReference type="SUPFAM" id="SSF53178">
    <property type="entry name" value="Peptidyl-tRNA hydrolase-like"/>
    <property type="match status" value="1"/>
</dbReference>
<dbReference type="PROSITE" id="PS01195">
    <property type="entry name" value="PEPT_TRNA_HYDROL_1"/>
    <property type="match status" value="1"/>
</dbReference>
<dbReference type="PROSITE" id="PS01196">
    <property type="entry name" value="PEPT_TRNA_HYDROL_2"/>
    <property type="match status" value="1"/>
</dbReference>
<keyword id="KW-0963">Cytoplasm</keyword>
<keyword id="KW-0378">Hydrolase</keyword>
<keyword id="KW-1185">Reference proteome</keyword>
<keyword id="KW-0694">RNA-binding</keyword>
<keyword id="KW-0820">tRNA-binding</keyword>
<accession>C4Z4L5</accession>
<name>PTH_LACE2</name>
<proteinExistence type="inferred from homology"/>
<sequence length="186" mass="20441">MYIIAGLGNPGKEYMGTRHNAGFSVIDELADKYNISVDTAKHKGLIGKGVIAGQKVILVKPMTYMNNSGECIREVMDYYKCDIDDFLVIFDDISLDVGKLRLRAKGSAGGHNGIKSIIAHLGSDKFKRIKFGVGDKPKNWDLADWVLGKFPAEEYATLREANKKACEAVECILTDGIESGMNKYNG</sequence>
<gene>
    <name evidence="1" type="primary">pth</name>
    <name type="ordered locus">EUBELI_01915</name>
</gene>
<reference key="1">
    <citation type="journal article" date="2009" name="Proc. Natl. Acad. Sci. U.S.A.">
        <title>Characterizing a model human gut microbiota composed of members of its two dominant bacterial phyla.</title>
        <authorList>
            <person name="Mahowald M.A."/>
            <person name="Rey F.E."/>
            <person name="Seedorf H."/>
            <person name="Turnbaugh P.J."/>
            <person name="Fulton R.S."/>
            <person name="Wollam A."/>
            <person name="Shah N."/>
            <person name="Wang C."/>
            <person name="Magrini V."/>
            <person name="Wilson R.K."/>
            <person name="Cantarel B.L."/>
            <person name="Coutinho P.M."/>
            <person name="Henrissat B."/>
            <person name="Crock L.W."/>
            <person name="Russell A."/>
            <person name="Verberkmoes N.C."/>
            <person name="Hettich R.L."/>
            <person name="Gordon J.I."/>
        </authorList>
    </citation>
    <scope>NUCLEOTIDE SEQUENCE [LARGE SCALE GENOMIC DNA]</scope>
    <source>
        <strain>ATCC 27750 / DSM 3376 / VPI C15-48 / C15-B4</strain>
    </source>
</reference>
<organism>
    <name type="scientific">Lachnospira eligens (strain ATCC 27750 / DSM 3376 / VPI C15-48 / C15-B4)</name>
    <name type="common">Eubacterium eligens</name>
    <dbReference type="NCBI Taxonomy" id="515620"/>
    <lineage>
        <taxon>Bacteria</taxon>
        <taxon>Bacillati</taxon>
        <taxon>Bacillota</taxon>
        <taxon>Clostridia</taxon>
        <taxon>Lachnospirales</taxon>
        <taxon>Lachnospiraceae</taxon>
        <taxon>Lachnospira</taxon>
    </lineage>
</organism>
<protein>
    <recommendedName>
        <fullName evidence="1">Peptidyl-tRNA hydrolase</fullName>
        <shortName evidence="1">Pth</shortName>
        <ecNumber evidence="1">3.1.1.29</ecNumber>
    </recommendedName>
</protein>
<comment type="function">
    <text evidence="1">Hydrolyzes ribosome-free peptidyl-tRNAs (with 1 or more amino acids incorporated), which drop off the ribosome during protein synthesis, or as a result of ribosome stalling.</text>
</comment>
<comment type="function">
    <text evidence="1">Catalyzes the release of premature peptidyl moieties from peptidyl-tRNA molecules trapped in stalled 50S ribosomal subunits, and thus maintains levels of free tRNAs and 50S ribosomes.</text>
</comment>
<comment type="catalytic activity">
    <reaction evidence="1">
        <text>an N-acyl-L-alpha-aminoacyl-tRNA + H2O = an N-acyl-L-amino acid + a tRNA + H(+)</text>
        <dbReference type="Rhea" id="RHEA:54448"/>
        <dbReference type="Rhea" id="RHEA-COMP:10123"/>
        <dbReference type="Rhea" id="RHEA-COMP:13883"/>
        <dbReference type="ChEBI" id="CHEBI:15377"/>
        <dbReference type="ChEBI" id="CHEBI:15378"/>
        <dbReference type="ChEBI" id="CHEBI:59874"/>
        <dbReference type="ChEBI" id="CHEBI:78442"/>
        <dbReference type="ChEBI" id="CHEBI:138191"/>
        <dbReference type="EC" id="3.1.1.29"/>
    </reaction>
</comment>
<comment type="subunit">
    <text evidence="1">Monomer.</text>
</comment>
<comment type="subcellular location">
    <subcellularLocation>
        <location evidence="1">Cytoplasm</location>
    </subcellularLocation>
</comment>
<comment type="similarity">
    <text evidence="1">Belongs to the PTH family.</text>
</comment>